<sequence>MSRLLEESLKTCPIVKRGEYHYFIHPISDGVPLVEPELLRDVSTRVIKMIDTEVDKIVTAEAMGIPIVTAVSIATDIPYVIMRKREYLLEGEIPVHQETGYSKGELYLNGINKGDKVVILDDVISTGGTLVAIINALKRAGADIKDVLCIIDRGNGQNVVEEKTGYKVKTLVKIEVVDGKVQILE</sequence>
<name>HPRT_METM6</name>
<evidence type="ECO:0000255" key="1">
    <source>
        <dbReference type="HAMAP-Rule" id="MF_01467"/>
    </source>
</evidence>
<reference key="1">
    <citation type="submission" date="2007-10" db="EMBL/GenBank/DDBJ databases">
        <title>Complete sequence of Methanococcus maripaludis C6.</title>
        <authorList>
            <consortium name="US DOE Joint Genome Institute"/>
            <person name="Copeland A."/>
            <person name="Lucas S."/>
            <person name="Lapidus A."/>
            <person name="Barry K."/>
            <person name="Glavina del Rio T."/>
            <person name="Dalin E."/>
            <person name="Tice H."/>
            <person name="Pitluck S."/>
            <person name="Clum A."/>
            <person name="Schmutz J."/>
            <person name="Larimer F."/>
            <person name="Land M."/>
            <person name="Hauser L."/>
            <person name="Kyrpides N."/>
            <person name="Mikhailova N."/>
            <person name="Sieprawska-Lupa M."/>
            <person name="Whitman W.B."/>
            <person name="Richardson P."/>
        </authorList>
    </citation>
    <scope>NUCLEOTIDE SEQUENCE [LARGE SCALE GENOMIC DNA]</scope>
    <source>
        <strain>C6 / ATCC BAA-1332</strain>
    </source>
</reference>
<keyword id="KW-0963">Cytoplasm</keyword>
<keyword id="KW-0328">Glycosyltransferase</keyword>
<keyword id="KW-0660">Purine salvage</keyword>
<keyword id="KW-0808">Transferase</keyword>
<feature type="chain" id="PRO_0000415472" description="Hypoxanthine/guanine phosphoribosyltransferase">
    <location>
        <begin position="1"/>
        <end position="185"/>
    </location>
</feature>
<dbReference type="EC" id="2.4.2.8" evidence="1"/>
<dbReference type="EMBL" id="CP000867">
    <property type="protein sequence ID" value="ABX01622.1"/>
    <property type="molecule type" value="Genomic_DNA"/>
</dbReference>
<dbReference type="SMR" id="A9A8E9"/>
<dbReference type="STRING" id="444158.MmarC6_0805"/>
<dbReference type="KEGG" id="mmx:MmarC6_0805"/>
<dbReference type="eggNOG" id="arCOG00030">
    <property type="taxonomic scope" value="Archaea"/>
</dbReference>
<dbReference type="HOGENOM" id="CLU_126376_0_0_2"/>
<dbReference type="OrthoDB" id="8323at2157"/>
<dbReference type="PhylomeDB" id="A9A8E9"/>
<dbReference type="UniPathway" id="UPA00591">
    <property type="reaction ID" value="UER00648"/>
</dbReference>
<dbReference type="GO" id="GO:0005737">
    <property type="term" value="C:cytoplasm"/>
    <property type="evidence" value="ECO:0007669"/>
    <property type="project" value="UniProtKB-SubCell"/>
</dbReference>
<dbReference type="GO" id="GO:0052657">
    <property type="term" value="F:guanine phosphoribosyltransferase activity"/>
    <property type="evidence" value="ECO:0007669"/>
    <property type="project" value="RHEA"/>
</dbReference>
<dbReference type="GO" id="GO:0004422">
    <property type="term" value="F:hypoxanthine phosphoribosyltransferase activity"/>
    <property type="evidence" value="ECO:0007669"/>
    <property type="project" value="UniProtKB-UniRule"/>
</dbReference>
<dbReference type="GO" id="GO:0032264">
    <property type="term" value="P:IMP salvage"/>
    <property type="evidence" value="ECO:0007669"/>
    <property type="project" value="UniProtKB-UniRule"/>
</dbReference>
<dbReference type="GO" id="GO:0006166">
    <property type="term" value="P:purine ribonucleoside salvage"/>
    <property type="evidence" value="ECO:0007669"/>
    <property type="project" value="UniProtKB-KW"/>
</dbReference>
<dbReference type="CDD" id="cd06223">
    <property type="entry name" value="PRTases_typeI"/>
    <property type="match status" value="1"/>
</dbReference>
<dbReference type="Gene3D" id="3.40.50.2020">
    <property type="match status" value="1"/>
</dbReference>
<dbReference type="HAMAP" id="MF_01467">
    <property type="entry name" value="Hypx_phosphoribosyltr"/>
    <property type="match status" value="1"/>
</dbReference>
<dbReference type="InterPro" id="IPR026597">
    <property type="entry name" value="HGPRTase-like"/>
</dbReference>
<dbReference type="InterPro" id="IPR000836">
    <property type="entry name" value="PRibTrfase_dom"/>
</dbReference>
<dbReference type="InterPro" id="IPR029057">
    <property type="entry name" value="PRTase-like"/>
</dbReference>
<dbReference type="InterPro" id="IPR050118">
    <property type="entry name" value="Pur/Pyrimidine_PRTase"/>
</dbReference>
<dbReference type="NCBIfam" id="NF040646">
    <property type="entry name" value="HPT_Archaea"/>
    <property type="match status" value="1"/>
</dbReference>
<dbReference type="NCBIfam" id="NF002635">
    <property type="entry name" value="PRK02304.1-4"/>
    <property type="match status" value="1"/>
</dbReference>
<dbReference type="PANTHER" id="PTHR43864">
    <property type="entry name" value="HYPOXANTHINE/GUANINE PHOSPHORIBOSYLTRANSFERASE"/>
    <property type="match status" value="1"/>
</dbReference>
<dbReference type="PANTHER" id="PTHR43864:SF1">
    <property type="entry name" value="XANTHINE PHOSPHORIBOSYLTRANSFERASE"/>
    <property type="match status" value="1"/>
</dbReference>
<dbReference type="Pfam" id="PF00156">
    <property type="entry name" value="Pribosyltran"/>
    <property type="match status" value="1"/>
</dbReference>
<dbReference type="SUPFAM" id="SSF53271">
    <property type="entry name" value="PRTase-like"/>
    <property type="match status" value="1"/>
</dbReference>
<dbReference type="PROSITE" id="PS00103">
    <property type="entry name" value="PUR_PYR_PR_TRANSFER"/>
    <property type="match status" value="1"/>
</dbReference>
<protein>
    <recommendedName>
        <fullName evidence="1">Hypoxanthine/guanine phosphoribosyltransferase</fullName>
        <shortName evidence="1">HGPRTase</shortName>
        <ecNumber evidence="1">2.4.2.8</ecNumber>
    </recommendedName>
</protein>
<comment type="function">
    <text evidence="1">Catalyzes a salvage reaction resulting in the formation of IMP that is energically less costly than de novo synthesis.</text>
</comment>
<comment type="catalytic activity">
    <reaction evidence="1">
        <text>IMP + diphosphate = hypoxanthine + 5-phospho-alpha-D-ribose 1-diphosphate</text>
        <dbReference type="Rhea" id="RHEA:17973"/>
        <dbReference type="ChEBI" id="CHEBI:17368"/>
        <dbReference type="ChEBI" id="CHEBI:33019"/>
        <dbReference type="ChEBI" id="CHEBI:58017"/>
        <dbReference type="ChEBI" id="CHEBI:58053"/>
        <dbReference type="EC" id="2.4.2.8"/>
    </reaction>
</comment>
<comment type="catalytic activity">
    <reaction evidence="1">
        <text>GMP + diphosphate = guanine + 5-phospho-alpha-D-ribose 1-diphosphate</text>
        <dbReference type="Rhea" id="RHEA:25424"/>
        <dbReference type="ChEBI" id="CHEBI:16235"/>
        <dbReference type="ChEBI" id="CHEBI:33019"/>
        <dbReference type="ChEBI" id="CHEBI:58017"/>
        <dbReference type="ChEBI" id="CHEBI:58115"/>
        <dbReference type="EC" id="2.4.2.8"/>
    </reaction>
</comment>
<comment type="pathway">
    <text evidence="1">Purine metabolism; IMP biosynthesis via salvage pathway; IMP from hypoxanthine: step 1/1.</text>
</comment>
<comment type="subunit">
    <text evidence="1">Homodimer.</text>
</comment>
<comment type="subcellular location">
    <subcellularLocation>
        <location evidence="1">Cytoplasm</location>
    </subcellularLocation>
</comment>
<comment type="similarity">
    <text evidence="1">Belongs to the purine/pyrimidine phosphoribosyltransferase family. Archaeal HPRT subfamily.</text>
</comment>
<organism>
    <name type="scientific">Methanococcus maripaludis (strain C6 / ATCC BAA-1332)</name>
    <dbReference type="NCBI Taxonomy" id="444158"/>
    <lineage>
        <taxon>Archaea</taxon>
        <taxon>Methanobacteriati</taxon>
        <taxon>Methanobacteriota</taxon>
        <taxon>Methanomada group</taxon>
        <taxon>Methanococci</taxon>
        <taxon>Methanococcales</taxon>
        <taxon>Methanococcaceae</taxon>
        <taxon>Methanococcus</taxon>
    </lineage>
</organism>
<accession>A9A8E9</accession>
<proteinExistence type="inferred from homology"/>
<gene>
    <name evidence="1" type="primary">hpt</name>
    <name type="ordered locus">MmarC6_0805</name>
</gene>